<dbReference type="EMBL" id="CP000468">
    <property type="protein sequence ID" value="ABJ02957.1"/>
    <property type="molecule type" value="Genomic_DNA"/>
</dbReference>
<dbReference type="RefSeq" id="WP_001190062.1">
    <property type="nucleotide sequence ID" value="NZ_CADILS010000051.1"/>
</dbReference>
<dbReference type="SMR" id="A1AH17"/>
<dbReference type="GeneID" id="93778510"/>
<dbReference type="KEGG" id="ecv:APECO1_2973"/>
<dbReference type="HOGENOM" id="CLU_113319_1_4_6"/>
<dbReference type="Proteomes" id="UP000008216">
    <property type="component" value="Chromosome"/>
</dbReference>
<dbReference type="GO" id="GO:0003700">
    <property type="term" value="F:DNA-binding transcription factor activity"/>
    <property type="evidence" value="ECO:0007669"/>
    <property type="project" value="UniProtKB-UniRule"/>
</dbReference>
<dbReference type="GO" id="GO:0016151">
    <property type="term" value="F:nickel cation binding"/>
    <property type="evidence" value="ECO:0007669"/>
    <property type="project" value="UniProtKB-UniRule"/>
</dbReference>
<dbReference type="GO" id="GO:0043565">
    <property type="term" value="F:sequence-specific DNA binding"/>
    <property type="evidence" value="ECO:0007669"/>
    <property type="project" value="UniProtKB-ARBA"/>
</dbReference>
<dbReference type="GO" id="GO:0010045">
    <property type="term" value="P:response to nickel cation"/>
    <property type="evidence" value="ECO:0007669"/>
    <property type="project" value="InterPro"/>
</dbReference>
<dbReference type="CDD" id="cd22231">
    <property type="entry name" value="RHH_NikR_HicB-like"/>
    <property type="match status" value="1"/>
</dbReference>
<dbReference type="FunFam" id="1.10.1220.10:FF:000001">
    <property type="entry name" value="Nickel-responsive regulator"/>
    <property type="match status" value="1"/>
</dbReference>
<dbReference type="FunFam" id="3.30.70.1150:FF:000002">
    <property type="entry name" value="Nickel-responsive regulator"/>
    <property type="match status" value="1"/>
</dbReference>
<dbReference type="Gene3D" id="3.30.70.1150">
    <property type="entry name" value="ACT-like. Chain A, domain 2"/>
    <property type="match status" value="1"/>
</dbReference>
<dbReference type="Gene3D" id="1.10.1220.10">
    <property type="entry name" value="Met repressor-like"/>
    <property type="match status" value="1"/>
</dbReference>
<dbReference type="HAMAP" id="MF_00476">
    <property type="entry name" value="NikR"/>
    <property type="match status" value="1"/>
</dbReference>
<dbReference type="InterPro" id="IPR027271">
    <property type="entry name" value="Acetolactate_synth/TF_NikR_C"/>
</dbReference>
<dbReference type="InterPro" id="IPR045865">
    <property type="entry name" value="ACT-like_dom_sf"/>
</dbReference>
<dbReference type="InterPro" id="IPR013321">
    <property type="entry name" value="Arc_rbn_hlx_hlx"/>
</dbReference>
<dbReference type="InterPro" id="IPR002145">
    <property type="entry name" value="CopG"/>
</dbReference>
<dbReference type="InterPro" id="IPR050192">
    <property type="entry name" value="CopG/NikR_regulator"/>
</dbReference>
<dbReference type="InterPro" id="IPR022988">
    <property type="entry name" value="Ni_resp_reg_NikR"/>
</dbReference>
<dbReference type="InterPro" id="IPR014160">
    <property type="entry name" value="Nickel_NikR_proteobac"/>
</dbReference>
<dbReference type="InterPro" id="IPR010985">
    <property type="entry name" value="Ribbon_hlx_hlx"/>
</dbReference>
<dbReference type="InterPro" id="IPR014864">
    <property type="entry name" value="TF_NikR_Ni-bd_C"/>
</dbReference>
<dbReference type="NCBIfam" id="TIGR02793">
    <property type="entry name" value="nikR"/>
    <property type="match status" value="1"/>
</dbReference>
<dbReference type="NCBIfam" id="NF002815">
    <property type="entry name" value="PRK02967.1"/>
    <property type="match status" value="1"/>
</dbReference>
<dbReference type="NCBIfam" id="NF003381">
    <property type="entry name" value="PRK04460.1"/>
    <property type="match status" value="1"/>
</dbReference>
<dbReference type="PANTHER" id="PTHR34719">
    <property type="entry name" value="NICKEL-RESPONSIVE REGULATOR"/>
    <property type="match status" value="1"/>
</dbReference>
<dbReference type="PANTHER" id="PTHR34719:SF2">
    <property type="entry name" value="NICKEL-RESPONSIVE REGULATOR"/>
    <property type="match status" value="1"/>
</dbReference>
<dbReference type="Pfam" id="PF08753">
    <property type="entry name" value="NikR_C"/>
    <property type="match status" value="1"/>
</dbReference>
<dbReference type="Pfam" id="PF01402">
    <property type="entry name" value="RHH_1"/>
    <property type="match status" value="1"/>
</dbReference>
<dbReference type="SUPFAM" id="SSF55021">
    <property type="entry name" value="ACT-like"/>
    <property type="match status" value="1"/>
</dbReference>
<dbReference type="SUPFAM" id="SSF47598">
    <property type="entry name" value="Ribbon-helix-helix"/>
    <property type="match status" value="1"/>
</dbReference>
<gene>
    <name evidence="1" type="primary">nikR</name>
    <name type="ordered locus">Ecok1_34630</name>
    <name type="ORF">APECO1_2973</name>
</gene>
<organism>
    <name type="scientific">Escherichia coli O1:K1 / APEC</name>
    <dbReference type="NCBI Taxonomy" id="405955"/>
    <lineage>
        <taxon>Bacteria</taxon>
        <taxon>Pseudomonadati</taxon>
        <taxon>Pseudomonadota</taxon>
        <taxon>Gammaproteobacteria</taxon>
        <taxon>Enterobacterales</taxon>
        <taxon>Enterobacteriaceae</taxon>
        <taxon>Escherichia</taxon>
    </lineage>
</organism>
<name>NIKR_ECOK1</name>
<keyword id="KW-0238">DNA-binding</keyword>
<keyword id="KW-0479">Metal-binding</keyword>
<keyword id="KW-0533">Nickel</keyword>
<keyword id="KW-1185">Reference proteome</keyword>
<keyword id="KW-0678">Repressor</keyword>
<keyword id="KW-0804">Transcription</keyword>
<keyword id="KW-0805">Transcription regulation</keyword>
<protein>
    <recommendedName>
        <fullName evidence="1">Nickel-responsive regulator</fullName>
    </recommendedName>
</protein>
<sequence length="133" mass="15094">MQRVTITLDDDLLETLDSLSQRRGYNNRSEAIRDILRSALAQEATQQHGTQGFAVLSYVYEHEKRDLASRIVSTQHHHHDLSVATLHVHINHDDCLEIAVLKGDMGDVQHFADDVIAQRGVRHGHLQCLPKED</sequence>
<comment type="function">
    <text evidence="1">Transcriptional repressor of the nikABCDE operon. Is active in the presence of excessive concentrations of intracellular nickel.</text>
</comment>
<comment type="cofactor">
    <cofactor evidence="1">
        <name>Ni(2+)</name>
        <dbReference type="ChEBI" id="CHEBI:49786"/>
    </cofactor>
    <text evidence="1">Binds 1 nickel ion per subunit.</text>
</comment>
<comment type="subunit">
    <text evidence="1">Homotetramer.</text>
</comment>
<comment type="similarity">
    <text evidence="1">Belongs to the transcriptional regulatory CopG/NikR family.</text>
</comment>
<reference key="1">
    <citation type="journal article" date="2007" name="J. Bacteriol.">
        <title>The genome sequence of avian pathogenic Escherichia coli strain O1:K1:H7 shares strong similarities with human extraintestinal pathogenic E. coli genomes.</title>
        <authorList>
            <person name="Johnson T.J."/>
            <person name="Kariyawasam S."/>
            <person name="Wannemuehler Y."/>
            <person name="Mangiamele P."/>
            <person name="Johnson S.J."/>
            <person name="Doetkott C."/>
            <person name="Skyberg J.A."/>
            <person name="Lynne A.M."/>
            <person name="Johnson J.R."/>
            <person name="Nolan L.K."/>
        </authorList>
    </citation>
    <scope>NUCLEOTIDE SEQUENCE [LARGE SCALE GENOMIC DNA]</scope>
</reference>
<proteinExistence type="inferred from homology"/>
<feature type="chain" id="PRO_1000014063" description="Nickel-responsive regulator">
    <location>
        <begin position="1"/>
        <end position="133"/>
    </location>
</feature>
<feature type="binding site" evidence="1">
    <location>
        <position position="76"/>
    </location>
    <ligand>
        <name>Ni(2+)</name>
        <dbReference type="ChEBI" id="CHEBI:49786"/>
    </ligand>
</feature>
<feature type="binding site" evidence="1">
    <location>
        <position position="87"/>
    </location>
    <ligand>
        <name>Ni(2+)</name>
        <dbReference type="ChEBI" id="CHEBI:49786"/>
    </ligand>
</feature>
<feature type="binding site" evidence="1">
    <location>
        <position position="89"/>
    </location>
    <ligand>
        <name>Ni(2+)</name>
        <dbReference type="ChEBI" id="CHEBI:49786"/>
    </ligand>
</feature>
<feature type="binding site" evidence="1">
    <location>
        <position position="95"/>
    </location>
    <ligand>
        <name>Ni(2+)</name>
        <dbReference type="ChEBI" id="CHEBI:49786"/>
    </ligand>
</feature>
<accession>A1AH17</accession>
<evidence type="ECO:0000255" key="1">
    <source>
        <dbReference type="HAMAP-Rule" id="MF_00476"/>
    </source>
</evidence>